<name>NHAS4_SYNY3</name>
<evidence type="ECO:0000255" key="1"/>
<evidence type="ECO:0000305" key="2"/>
<evidence type="ECO:0000305" key="3">
    <source>
    </source>
</evidence>
<comment type="function">
    <text evidence="3">Na(+)/H(+) antiporter.</text>
</comment>
<comment type="subcellular location">
    <subcellularLocation>
        <location evidence="2">Membrane</location>
        <topology evidence="2">Multi-pass membrane protein</topology>
    </subcellularLocation>
</comment>
<comment type="similarity">
    <text evidence="2">Belongs to the monovalent cation:proton antiporter 2 (CPA2) transporter (TC 2.A.37) family.</text>
</comment>
<keyword id="KW-0050">Antiport</keyword>
<keyword id="KW-0406">Ion transport</keyword>
<keyword id="KW-0472">Membrane</keyword>
<keyword id="KW-1185">Reference proteome</keyword>
<keyword id="KW-0915">Sodium</keyword>
<keyword id="KW-0739">Sodium transport</keyword>
<keyword id="KW-0812">Transmembrane</keyword>
<keyword id="KW-1133">Transmembrane helix</keyword>
<keyword id="KW-0813">Transport</keyword>
<reference key="1">
    <citation type="journal article" date="1996" name="DNA Res.">
        <title>Sequence analysis of the genome of the unicellular cyanobacterium Synechocystis sp. strain PCC6803. II. Sequence determination of the entire genome and assignment of potential protein-coding regions.</title>
        <authorList>
            <person name="Kaneko T."/>
            <person name="Sato S."/>
            <person name="Kotani H."/>
            <person name="Tanaka A."/>
            <person name="Asamizu E."/>
            <person name="Nakamura Y."/>
            <person name="Miyajima N."/>
            <person name="Hirosawa M."/>
            <person name="Sugiura M."/>
            <person name="Sasamoto S."/>
            <person name="Kimura T."/>
            <person name="Hosouchi T."/>
            <person name="Matsuno A."/>
            <person name="Muraki A."/>
            <person name="Nakazaki N."/>
            <person name="Naruo K."/>
            <person name="Okumura S."/>
            <person name="Shimpo S."/>
            <person name="Takeuchi C."/>
            <person name="Wada T."/>
            <person name="Watanabe A."/>
            <person name="Yamada M."/>
            <person name="Yasuda M."/>
            <person name="Tabata S."/>
        </authorList>
    </citation>
    <scope>NUCLEOTIDE SEQUENCE [LARGE SCALE GENOMIC DNA]</scope>
    <source>
        <strain>ATCC 27184 / PCC 6803 / Kazusa</strain>
    </source>
</reference>
<reference key="2">
    <citation type="journal article" date="2001" name="J. Bacteriol.">
        <title>Functional expression in Escherichia coli of low-affinity and high-affinity Na(+)(Li(+))/H(+) antiporters of Synechocystis.</title>
        <authorList>
            <person name="Inaba M."/>
            <person name="Sakamoto A."/>
            <person name="Murata N."/>
        </authorList>
    </citation>
    <scope>GENE NAME</scope>
    <source>
        <strain>ATCC 27184 / PCC 6803 / N-1</strain>
    </source>
</reference>
<reference key="3">
    <citation type="journal article" date="2002" name="Biochemistry (Mosc.)">
        <title>Functional analysis of the Na+/H+ antiporter encoding genes of the cyanobacterium Synechocystis PCC 6803.</title>
        <authorList>
            <person name="Elanskaya I.V."/>
            <person name="Karandashova I.V."/>
            <person name="Bogachev A.V."/>
            <person name="Hagemann M."/>
        </authorList>
    </citation>
    <scope>FUNCTION</scope>
    <source>
        <strain>ATCC 27184 / PCC 6803 / N-1</strain>
    </source>
</reference>
<sequence>MDTNTLLLILANIIVIIGLARLIGLLFARFQQPPVIGEIIAGIMLGPSLLGLLSPALEKSFFPATTQPFLYLLSEIGLIFYMFLVGLELNPQYLRQKLKVAILTSNVSIFFPFVLGIVLSFFVLYSLNQPNKTSFIPFALFIGAAMSITAFPVLARILKDTGLDKTPLGTLGLTCASVDDISAWCLLAIAIAVTRTDNIFGAFPTLLGIIVYTVFMVTLGRKFFKYILRNYGQKNYLSQGLLTFIYIMVILSAMLTEWIGIDVIFGGFILGAILPKNTNLSTELATKTEDFVSTFLLPIFFAYSGLSTDLGLLNKPYLWAVCALVVAAAIAGKYCGVYVTTRALGVEKQEAKALGWLMNTRGLTELIILNVGLKLGVISPVIFTMFVIMAIITTIITSPLVVKIYPAPAH</sequence>
<proteinExistence type="inferred from homology"/>
<feature type="chain" id="PRO_0000423930" description="Na(+)/H(+) antiporter NhaS4">
    <location>
        <begin position="1"/>
        <end position="410"/>
    </location>
</feature>
<feature type="transmembrane region" description="Helical" evidence="1">
    <location>
        <begin position="7"/>
        <end position="27"/>
    </location>
</feature>
<feature type="transmembrane region" description="Helical" evidence="1">
    <location>
        <begin position="33"/>
        <end position="53"/>
    </location>
</feature>
<feature type="transmembrane region" description="Helical" evidence="1">
    <location>
        <begin position="69"/>
        <end position="89"/>
    </location>
</feature>
<feature type="transmembrane region" description="Helical" evidence="1">
    <location>
        <begin position="107"/>
        <end position="127"/>
    </location>
</feature>
<feature type="transmembrane region" description="Helical" evidence="1">
    <location>
        <begin position="135"/>
        <end position="155"/>
    </location>
</feature>
<feature type="transmembrane region" description="Helical" evidence="1">
    <location>
        <begin position="173"/>
        <end position="193"/>
    </location>
</feature>
<feature type="transmembrane region" description="Helical" evidence="1">
    <location>
        <begin position="199"/>
        <end position="219"/>
    </location>
</feature>
<feature type="transmembrane region" description="Helical" evidence="1">
    <location>
        <begin position="241"/>
        <end position="261"/>
    </location>
</feature>
<feature type="transmembrane region" description="Helical" evidence="1">
    <location>
        <begin position="291"/>
        <end position="311"/>
    </location>
</feature>
<feature type="transmembrane region" description="Helical" evidence="1">
    <location>
        <begin position="319"/>
        <end position="339"/>
    </location>
</feature>
<feature type="transmembrane region" description="Helical" evidence="1">
    <location>
        <begin position="376"/>
        <end position="396"/>
    </location>
</feature>
<accession>P72973</accession>
<gene>
    <name type="primary">nhaS4</name>
    <name type="ordered locus">slr1595</name>
</gene>
<organism>
    <name type="scientific">Synechocystis sp. (strain ATCC 27184 / PCC 6803 / Kazusa)</name>
    <dbReference type="NCBI Taxonomy" id="1111708"/>
    <lineage>
        <taxon>Bacteria</taxon>
        <taxon>Bacillati</taxon>
        <taxon>Cyanobacteriota</taxon>
        <taxon>Cyanophyceae</taxon>
        <taxon>Synechococcales</taxon>
        <taxon>Merismopediaceae</taxon>
        <taxon>Synechocystis</taxon>
    </lineage>
</organism>
<dbReference type="EMBL" id="BA000022">
    <property type="protein sequence ID" value="BAA16991.1"/>
    <property type="molecule type" value="Genomic_DNA"/>
</dbReference>
<dbReference type="PIR" id="S74951">
    <property type="entry name" value="S74951"/>
</dbReference>
<dbReference type="SMR" id="P72973"/>
<dbReference type="IntAct" id="P72973">
    <property type="interactions" value="4"/>
</dbReference>
<dbReference type="STRING" id="1148.gene:10497852"/>
<dbReference type="PaxDb" id="1148-1652066"/>
<dbReference type="EnsemblBacteria" id="BAA16991">
    <property type="protein sequence ID" value="BAA16991"/>
    <property type="gene ID" value="BAA16991"/>
</dbReference>
<dbReference type="KEGG" id="syn:slr1595"/>
<dbReference type="eggNOG" id="COG0475">
    <property type="taxonomic scope" value="Bacteria"/>
</dbReference>
<dbReference type="InParanoid" id="P72973"/>
<dbReference type="PhylomeDB" id="P72973"/>
<dbReference type="Proteomes" id="UP000001425">
    <property type="component" value="Chromosome"/>
</dbReference>
<dbReference type="GO" id="GO:0016020">
    <property type="term" value="C:membrane"/>
    <property type="evidence" value="ECO:0007669"/>
    <property type="project" value="UniProtKB-SubCell"/>
</dbReference>
<dbReference type="GO" id="GO:0015297">
    <property type="term" value="F:antiporter activity"/>
    <property type="evidence" value="ECO:0007669"/>
    <property type="project" value="UniProtKB-KW"/>
</dbReference>
<dbReference type="GO" id="GO:1902600">
    <property type="term" value="P:proton transmembrane transport"/>
    <property type="evidence" value="ECO:0007669"/>
    <property type="project" value="InterPro"/>
</dbReference>
<dbReference type="GO" id="GO:0006814">
    <property type="term" value="P:sodium ion transport"/>
    <property type="evidence" value="ECO:0007669"/>
    <property type="project" value="UniProtKB-KW"/>
</dbReference>
<dbReference type="Gene3D" id="1.20.1530.20">
    <property type="match status" value="1"/>
</dbReference>
<dbReference type="InterPro" id="IPR006153">
    <property type="entry name" value="Cation/H_exchanger_TM"/>
</dbReference>
<dbReference type="InterPro" id="IPR050794">
    <property type="entry name" value="CPA2_transporter"/>
</dbReference>
<dbReference type="InterPro" id="IPR038770">
    <property type="entry name" value="Na+/solute_symporter_sf"/>
</dbReference>
<dbReference type="PANTHER" id="PTHR32468">
    <property type="entry name" value="CATION/H + ANTIPORTER"/>
    <property type="match status" value="1"/>
</dbReference>
<dbReference type="PANTHER" id="PTHR32468:SF0">
    <property type="entry name" value="K(+)_H(+) ANTIPORTER 1"/>
    <property type="match status" value="1"/>
</dbReference>
<dbReference type="Pfam" id="PF00999">
    <property type="entry name" value="Na_H_Exchanger"/>
    <property type="match status" value="1"/>
</dbReference>
<protein>
    <recommendedName>
        <fullName>Na(+)/H(+) antiporter NhaS4</fullName>
    </recommendedName>
    <alternativeName>
        <fullName>Sodium/proton antiporter NhaS4</fullName>
    </alternativeName>
</protein>